<accession>A8AN26</accession>
<protein>
    <recommendedName>
        <fullName evidence="1">Cytochrome c-552</fullName>
        <ecNumber evidence="1">1.7.2.2</ecNumber>
    </recommendedName>
    <alternativeName>
        <fullName evidence="1">Ammonia-forming cytochrome c nitrite reductase</fullName>
        <shortName evidence="1">Cytochrome c nitrite reductase</shortName>
    </alternativeName>
</protein>
<name>NRFA_CITK8</name>
<proteinExistence type="inferred from homology"/>
<feature type="signal peptide" evidence="1">
    <location>
        <begin position="1"/>
        <end position="26"/>
    </location>
</feature>
<feature type="chain" id="PRO_1000065800" description="Cytochrome c-552">
    <location>
        <begin position="27"/>
        <end position="478"/>
    </location>
</feature>
<feature type="binding site" description="axial binding residue" evidence="1">
    <location>
        <position position="94"/>
    </location>
    <ligand>
        <name>heme c</name>
        <dbReference type="ChEBI" id="CHEBI:61717"/>
        <label>3</label>
    </ligand>
    <ligandPart>
        <name>Fe</name>
        <dbReference type="ChEBI" id="CHEBI:18248"/>
    </ligandPart>
</feature>
<feature type="binding site" description="covalent" evidence="1">
    <location>
        <position position="122"/>
    </location>
    <ligand>
        <name>heme</name>
        <dbReference type="ChEBI" id="CHEBI:30413"/>
        <label>1</label>
    </ligand>
</feature>
<feature type="binding site" description="covalent" evidence="1">
    <location>
        <position position="125"/>
    </location>
    <ligand>
        <name>heme</name>
        <dbReference type="ChEBI" id="CHEBI:30413"/>
        <label>1</label>
    </ligand>
</feature>
<feature type="binding site" description="axial binding residue" evidence="1">
    <location>
        <position position="126"/>
    </location>
    <ligand>
        <name>heme</name>
        <dbReference type="ChEBI" id="CHEBI:30413"/>
        <label>1</label>
    </ligand>
    <ligandPart>
        <name>Fe</name>
        <dbReference type="ChEBI" id="CHEBI:18248"/>
    </ligandPart>
</feature>
<feature type="binding site" description="covalent" evidence="1">
    <location>
        <position position="160"/>
    </location>
    <ligand>
        <name>heme c</name>
        <dbReference type="ChEBI" id="CHEBI:61717"/>
        <label>2</label>
    </ligand>
</feature>
<feature type="binding site" description="covalent" evidence="1">
    <location>
        <position position="163"/>
    </location>
    <ligand>
        <name>heme c</name>
        <dbReference type="ChEBI" id="CHEBI:61717"/>
        <label>2</label>
    </ligand>
</feature>
<feature type="binding site" description="axial binding residue" evidence="1">
    <location>
        <position position="164"/>
    </location>
    <ligand>
        <name>heme c</name>
        <dbReference type="ChEBI" id="CHEBI:61717"/>
        <label>2</label>
    </ligand>
    <ligandPart>
        <name>Fe</name>
        <dbReference type="ChEBI" id="CHEBI:18248"/>
    </ligandPart>
</feature>
<feature type="binding site" description="covalent" evidence="1">
    <location>
        <position position="209"/>
    </location>
    <ligand>
        <name>heme c</name>
        <dbReference type="ChEBI" id="CHEBI:61717"/>
        <label>3</label>
    </ligand>
</feature>
<feature type="binding site" description="covalent" evidence="1">
    <location>
        <position position="212"/>
    </location>
    <ligand>
        <name>heme c</name>
        <dbReference type="ChEBI" id="CHEBI:61717"/>
        <label>3</label>
    </ligand>
</feature>
<feature type="binding site" description="axial binding residue" evidence="1">
    <location>
        <position position="213"/>
    </location>
    <ligand>
        <name>heme c</name>
        <dbReference type="ChEBI" id="CHEBI:61717"/>
        <label>3</label>
    </ligand>
    <ligandPart>
        <name>Fe</name>
        <dbReference type="ChEBI" id="CHEBI:18248"/>
    </ligandPart>
</feature>
<feature type="binding site" evidence="1">
    <location>
        <position position="215"/>
    </location>
    <ligand>
        <name>Ca(2+)</name>
        <dbReference type="ChEBI" id="CHEBI:29108"/>
    </ligand>
</feature>
<feature type="binding site" evidence="1">
    <location>
        <position position="216"/>
    </location>
    <ligand>
        <name>Ca(2+)</name>
        <dbReference type="ChEBI" id="CHEBI:29108"/>
    </ligand>
</feature>
<feature type="binding site" evidence="1">
    <location>
        <position position="216"/>
    </location>
    <ligand>
        <name>substrate</name>
    </ligand>
</feature>
<feature type="binding site" evidence="1">
    <location>
        <position position="261"/>
    </location>
    <ligand>
        <name>Ca(2+)</name>
        <dbReference type="ChEBI" id="CHEBI:29108"/>
    </ligand>
</feature>
<feature type="binding site" evidence="1">
    <location>
        <position position="263"/>
    </location>
    <ligand>
        <name>Ca(2+)</name>
        <dbReference type="ChEBI" id="CHEBI:29108"/>
    </ligand>
</feature>
<feature type="binding site" evidence="1">
    <location>
        <position position="264"/>
    </location>
    <ligand>
        <name>substrate</name>
    </ligand>
</feature>
<feature type="binding site" description="axial binding residue" evidence="1">
    <location>
        <position position="275"/>
    </location>
    <ligand>
        <name>heme c</name>
        <dbReference type="ChEBI" id="CHEBI:61717"/>
        <label>5</label>
    </ligand>
    <ligandPart>
        <name>Fe</name>
        <dbReference type="ChEBI" id="CHEBI:18248"/>
    </ligandPart>
</feature>
<feature type="binding site" description="covalent" evidence="1">
    <location>
        <position position="282"/>
    </location>
    <ligand>
        <name>heme c</name>
        <dbReference type="ChEBI" id="CHEBI:61717"/>
        <label>4</label>
    </ligand>
</feature>
<feature type="binding site" description="covalent" evidence="1">
    <location>
        <position position="285"/>
    </location>
    <ligand>
        <name>heme c</name>
        <dbReference type="ChEBI" id="CHEBI:61717"/>
        <label>4</label>
    </ligand>
</feature>
<feature type="binding site" description="axial binding residue" evidence="1">
    <location>
        <position position="286"/>
    </location>
    <ligand>
        <name>heme c</name>
        <dbReference type="ChEBI" id="CHEBI:61717"/>
        <label>4</label>
    </ligand>
    <ligandPart>
        <name>Fe</name>
        <dbReference type="ChEBI" id="CHEBI:18248"/>
    </ligandPart>
</feature>
<feature type="binding site" description="axial binding residue" evidence="1">
    <location>
        <position position="301"/>
    </location>
    <ligand>
        <name>heme c</name>
        <dbReference type="ChEBI" id="CHEBI:61717"/>
        <label>2</label>
    </ligand>
    <ligandPart>
        <name>Fe</name>
        <dbReference type="ChEBI" id="CHEBI:18248"/>
    </ligandPart>
</feature>
<feature type="binding site" description="covalent" evidence="1">
    <location>
        <position position="314"/>
    </location>
    <ligand>
        <name>heme c</name>
        <dbReference type="ChEBI" id="CHEBI:61717"/>
        <label>5</label>
    </ligand>
</feature>
<feature type="binding site" description="covalent" evidence="1">
    <location>
        <position position="317"/>
    </location>
    <ligand>
        <name>heme c</name>
        <dbReference type="ChEBI" id="CHEBI:61717"/>
        <label>5</label>
    </ligand>
</feature>
<feature type="binding site" description="axial binding residue" evidence="1">
    <location>
        <position position="318"/>
    </location>
    <ligand>
        <name>heme c</name>
        <dbReference type="ChEBI" id="CHEBI:61717"/>
        <label>5</label>
    </ligand>
    <ligandPart>
        <name>Fe</name>
        <dbReference type="ChEBI" id="CHEBI:18248"/>
    </ligandPart>
</feature>
<feature type="binding site" description="axial binding residue" evidence="1">
    <location>
        <position position="393"/>
    </location>
    <ligand>
        <name>heme c</name>
        <dbReference type="ChEBI" id="CHEBI:61717"/>
        <label>4</label>
    </ligand>
    <ligandPart>
        <name>Fe</name>
        <dbReference type="ChEBI" id="CHEBI:18248"/>
    </ligandPart>
</feature>
<keyword id="KW-0106">Calcium</keyword>
<keyword id="KW-0249">Electron transport</keyword>
<keyword id="KW-0349">Heme</keyword>
<keyword id="KW-0408">Iron</keyword>
<keyword id="KW-0479">Metal-binding</keyword>
<keyword id="KW-0560">Oxidoreductase</keyword>
<keyword id="KW-0574">Periplasm</keyword>
<keyword id="KW-1185">Reference proteome</keyword>
<keyword id="KW-0732">Signal</keyword>
<keyword id="KW-0813">Transport</keyword>
<dbReference type="EC" id="1.7.2.2" evidence="1"/>
<dbReference type="EMBL" id="CP000822">
    <property type="protein sequence ID" value="ABV14890.1"/>
    <property type="molecule type" value="Genomic_DNA"/>
</dbReference>
<dbReference type="RefSeq" id="WP_012134584.1">
    <property type="nucleotide sequence ID" value="NC_009792.1"/>
</dbReference>
<dbReference type="SMR" id="A8AN26"/>
<dbReference type="STRING" id="290338.CKO_03814"/>
<dbReference type="GeneID" id="45137493"/>
<dbReference type="KEGG" id="cko:CKO_03814"/>
<dbReference type="HOGENOM" id="CLU_035040_1_0_6"/>
<dbReference type="OrthoDB" id="9780421at2"/>
<dbReference type="UniPathway" id="UPA00653"/>
<dbReference type="Proteomes" id="UP000008148">
    <property type="component" value="Chromosome"/>
</dbReference>
<dbReference type="GO" id="GO:0030288">
    <property type="term" value="C:outer membrane-bounded periplasmic space"/>
    <property type="evidence" value="ECO:0007669"/>
    <property type="project" value="TreeGrafter"/>
</dbReference>
<dbReference type="GO" id="GO:0005509">
    <property type="term" value="F:calcium ion binding"/>
    <property type="evidence" value="ECO:0007669"/>
    <property type="project" value="UniProtKB-UniRule"/>
</dbReference>
<dbReference type="GO" id="GO:0020037">
    <property type="term" value="F:heme binding"/>
    <property type="evidence" value="ECO:0007669"/>
    <property type="project" value="InterPro"/>
</dbReference>
<dbReference type="GO" id="GO:0005506">
    <property type="term" value="F:iron ion binding"/>
    <property type="evidence" value="ECO:0007669"/>
    <property type="project" value="UniProtKB-UniRule"/>
</dbReference>
<dbReference type="GO" id="GO:0042279">
    <property type="term" value="F:nitrite reductase (cytochrome, ammonia-forming) activity"/>
    <property type="evidence" value="ECO:0007669"/>
    <property type="project" value="UniProtKB-UniRule"/>
</dbReference>
<dbReference type="GO" id="GO:0019645">
    <property type="term" value="P:anaerobic electron transport chain"/>
    <property type="evidence" value="ECO:0007669"/>
    <property type="project" value="TreeGrafter"/>
</dbReference>
<dbReference type="GO" id="GO:0042128">
    <property type="term" value="P:nitrate assimilation"/>
    <property type="evidence" value="ECO:0007669"/>
    <property type="project" value="UniProtKB-UniRule"/>
</dbReference>
<dbReference type="CDD" id="cd00548">
    <property type="entry name" value="NrfA-like"/>
    <property type="match status" value="1"/>
</dbReference>
<dbReference type="FunFam" id="1.10.1130.10:FF:000002">
    <property type="entry name" value="Cytochrome c-552"/>
    <property type="match status" value="1"/>
</dbReference>
<dbReference type="FunFam" id="1.20.140.10:FF:000014">
    <property type="entry name" value="Cytochrome c-552"/>
    <property type="match status" value="1"/>
</dbReference>
<dbReference type="Gene3D" id="1.20.140.10">
    <property type="entry name" value="Butyryl-CoA Dehydrogenase, subunit A, domain 3"/>
    <property type="match status" value="1"/>
</dbReference>
<dbReference type="Gene3D" id="1.10.1130.10">
    <property type="entry name" value="Flavocytochrome C3, Chain A"/>
    <property type="match status" value="1"/>
</dbReference>
<dbReference type="HAMAP" id="MF_01182">
    <property type="entry name" value="Cytochrom_C552"/>
    <property type="match status" value="1"/>
</dbReference>
<dbReference type="InterPro" id="IPR003321">
    <property type="entry name" value="Cyt_c552"/>
</dbReference>
<dbReference type="InterPro" id="IPR017570">
    <property type="entry name" value="Cyt_c_NO2Rdtase_formate-dep"/>
</dbReference>
<dbReference type="InterPro" id="IPR036280">
    <property type="entry name" value="Multihaem_cyt_sf"/>
</dbReference>
<dbReference type="NCBIfam" id="TIGR03152">
    <property type="entry name" value="cyto_c552_HCOOH"/>
    <property type="match status" value="1"/>
</dbReference>
<dbReference type="NCBIfam" id="NF008339">
    <property type="entry name" value="PRK11125.1"/>
    <property type="match status" value="1"/>
</dbReference>
<dbReference type="PANTHER" id="PTHR30633:SF0">
    <property type="entry name" value="CYTOCHROME C-552"/>
    <property type="match status" value="1"/>
</dbReference>
<dbReference type="PANTHER" id="PTHR30633">
    <property type="entry name" value="CYTOCHROME C-552 RESPIRATORY NITRITE REDUCTASE"/>
    <property type="match status" value="1"/>
</dbReference>
<dbReference type="Pfam" id="PF02335">
    <property type="entry name" value="Cytochrom_C552"/>
    <property type="match status" value="1"/>
</dbReference>
<dbReference type="PIRSF" id="PIRSF000243">
    <property type="entry name" value="Cyt_c552"/>
    <property type="match status" value="1"/>
</dbReference>
<dbReference type="SUPFAM" id="SSF48695">
    <property type="entry name" value="Multiheme cytochromes"/>
    <property type="match status" value="1"/>
</dbReference>
<dbReference type="PROSITE" id="PS51008">
    <property type="entry name" value="MULTIHEME_CYTC"/>
    <property type="match status" value="1"/>
</dbReference>
<reference key="1">
    <citation type="submission" date="2007-08" db="EMBL/GenBank/DDBJ databases">
        <authorList>
            <consortium name="The Citrobacter koseri Genome Sequencing Project"/>
            <person name="McClelland M."/>
            <person name="Sanderson E.K."/>
            <person name="Porwollik S."/>
            <person name="Spieth J."/>
            <person name="Clifton W.S."/>
            <person name="Latreille P."/>
            <person name="Courtney L."/>
            <person name="Wang C."/>
            <person name="Pepin K."/>
            <person name="Bhonagiri V."/>
            <person name="Nash W."/>
            <person name="Johnson M."/>
            <person name="Thiruvilangam P."/>
            <person name="Wilson R."/>
        </authorList>
    </citation>
    <scope>NUCLEOTIDE SEQUENCE [LARGE SCALE GENOMIC DNA]</scope>
    <source>
        <strain>ATCC BAA-895 / CDC 4225-83 / SGSC4696</strain>
    </source>
</reference>
<comment type="function">
    <text evidence="1">Catalyzes the reduction of nitrite to ammonia, consuming six electrons in the process.</text>
</comment>
<comment type="catalytic activity">
    <reaction evidence="1">
        <text>6 Fe(III)-[cytochrome c] + NH4(+) + 2 H2O = 6 Fe(II)-[cytochrome c] + nitrite + 8 H(+)</text>
        <dbReference type="Rhea" id="RHEA:13089"/>
        <dbReference type="Rhea" id="RHEA-COMP:10350"/>
        <dbReference type="Rhea" id="RHEA-COMP:14399"/>
        <dbReference type="ChEBI" id="CHEBI:15377"/>
        <dbReference type="ChEBI" id="CHEBI:15378"/>
        <dbReference type="ChEBI" id="CHEBI:16301"/>
        <dbReference type="ChEBI" id="CHEBI:28938"/>
        <dbReference type="ChEBI" id="CHEBI:29033"/>
        <dbReference type="ChEBI" id="CHEBI:29034"/>
        <dbReference type="EC" id="1.7.2.2"/>
    </reaction>
</comment>
<comment type="cofactor">
    <cofactor evidence="1">
        <name>Ca(2+)</name>
        <dbReference type="ChEBI" id="CHEBI:29108"/>
    </cofactor>
    <text evidence="1">Binds 1 Ca(2+) ion per monomer.</text>
</comment>
<comment type="cofactor">
    <cofactor evidence="1">
        <name>heme c</name>
        <dbReference type="ChEBI" id="CHEBI:61717"/>
    </cofactor>
    <text evidence="1">Binds 5 heme c groups covalently per monomer.</text>
</comment>
<comment type="pathway">
    <text evidence="1">Nitrogen metabolism; nitrate reduction (assimilation).</text>
</comment>
<comment type="subcellular location">
    <subcellularLocation>
        <location evidence="1">Periplasm</location>
    </subcellularLocation>
</comment>
<comment type="similarity">
    <text evidence="1">Belongs to the cytochrome c-552 family.</text>
</comment>
<organism>
    <name type="scientific">Citrobacter koseri (strain ATCC BAA-895 / CDC 4225-83 / SGSC4696)</name>
    <dbReference type="NCBI Taxonomy" id="290338"/>
    <lineage>
        <taxon>Bacteria</taxon>
        <taxon>Pseudomonadati</taxon>
        <taxon>Pseudomonadota</taxon>
        <taxon>Gammaproteobacteria</taxon>
        <taxon>Enterobacterales</taxon>
        <taxon>Enterobacteriaceae</taxon>
        <taxon>Citrobacter</taxon>
    </lineage>
</organism>
<evidence type="ECO:0000255" key="1">
    <source>
        <dbReference type="HAMAP-Rule" id="MF_01182"/>
    </source>
</evidence>
<sequence length="478" mass="53688">MARTILRARRFFSLILPFFFISSVYAEQTSVPAKTVTVEAKNETFAPQHPDQYLSWKATSEQSTREDALAEDPRLVILWAGYPFSRDYNKPRGHAYAVTDVRETLRTGAPKNAEDGPLPMACWSCKSPDVARLIQKDGEDGYFHGKWARGGPEIVNALGCADCHNTASDDFAKGKPALTLSRPYAERAMETIGKPFDKASRFDQQSMVCGQCHVEYYFDGKNKAVKFPWDEGTKVEDMEKYYDAIAFSDWTNPLSKTPMLKAQHPEYETWSVGIHGKNNVTCIDCHMPKVQNAEGKLYTDHKIGNPFDNFAQTCANCHTQDKASLQKVVAERKQAIHDLKIKVEDQLVHAHFEAKAAWDAGATEAEMKPILDDIRHAQWRWDLAIASHGIHMHAPDEGLRMLGGAMDKAADARTKLVRLLGSKGITHEIPLPDISTKEKAQKAIGLNMQQINAEKQDFIKTVIPQWEDQARKNGLLSQ</sequence>
<gene>
    <name evidence="1" type="primary">nrfA</name>
    <name type="ordered locus">CKO_03814</name>
</gene>